<accession>Q6GEW2</accession>
<proteinExistence type="inferred from homology"/>
<sequence length="412" mass="45172">MSYITKQDKVIAEAIEREFQRQNSNIELIASENFVSEAVMEAQGSVLTNKYAEGYPGRRYYGGCEFVDVTESIAIDRAKALFGAEHVNVQPHSGSQANMAVYLVALEMGDTVLGMNLSHGGHLTHGAPVNFSGKFYNFVEYGVDKDTERINYDEVRKLALEHKPKLIVAGASAYSRTIDFKKFKEIADEVNAKLMVDMAHIAGLVAAGLHPNPVEYADFVTTTTHKTLRGPRGGMILCKEEYKKDIDKTIFPGIQGGPLEHVIAAKAVAFGEALENNFKTYQQQVVKNAKVLAEALINEGFRIVSGGTDNHLVAVDVKGSIGLTGKEAEETLDSVGITCNKNTIPFDQEKPFVTSGIRLGTPAATTRGFDEKAFEEVAKIISLALKNSKDEEKLQQAKERVAKLTAEYPLYQ</sequence>
<keyword id="KW-0028">Amino-acid biosynthesis</keyword>
<keyword id="KW-0963">Cytoplasm</keyword>
<keyword id="KW-0554">One-carbon metabolism</keyword>
<keyword id="KW-0663">Pyridoxal phosphate</keyword>
<keyword id="KW-0808">Transferase</keyword>
<comment type="function">
    <text evidence="1">Catalyzes the reversible interconversion of serine and glycine with tetrahydrofolate (THF) serving as the one-carbon carrier. This reaction serves as the major source of one-carbon groups required for the biosynthesis of purines, thymidylate, methionine, and other important biomolecules. Also exhibits THF-independent aldolase activity toward beta-hydroxyamino acids, producing glycine and aldehydes, via a retro-aldol mechanism.</text>
</comment>
<comment type="catalytic activity">
    <reaction evidence="1">
        <text>(6R)-5,10-methylene-5,6,7,8-tetrahydrofolate + glycine + H2O = (6S)-5,6,7,8-tetrahydrofolate + L-serine</text>
        <dbReference type="Rhea" id="RHEA:15481"/>
        <dbReference type="ChEBI" id="CHEBI:15377"/>
        <dbReference type="ChEBI" id="CHEBI:15636"/>
        <dbReference type="ChEBI" id="CHEBI:33384"/>
        <dbReference type="ChEBI" id="CHEBI:57305"/>
        <dbReference type="ChEBI" id="CHEBI:57453"/>
        <dbReference type="EC" id="2.1.2.1"/>
    </reaction>
</comment>
<comment type="cofactor">
    <cofactor evidence="1">
        <name>pyridoxal 5'-phosphate</name>
        <dbReference type="ChEBI" id="CHEBI:597326"/>
    </cofactor>
</comment>
<comment type="pathway">
    <text evidence="1">One-carbon metabolism; tetrahydrofolate interconversion.</text>
</comment>
<comment type="pathway">
    <text evidence="1">Amino-acid biosynthesis; glycine biosynthesis; glycine from L-serine: step 1/1.</text>
</comment>
<comment type="subunit">
    <text evidence="1">Homodimer.</text>
</comment>
<comment type="subcellular location">
    <subcellularLocation>
        <location evidence="1">Cytoplasm</location>
    </subcellularLocation>
</comment>
<comment type="similarity">
    <text evidence="1">Belongs to the SHMT family.</text>
</comment>
<gene>
    <name evidence="1" type="primary">glyA</name>
    <name type="ordered locus">SAR2201</name>
</gene>
<evidence type="ECO:0000255" key="1">
    <source>
        <dbReference type="HAMAP-Rule" id="MF_00051"/>
    </source>
</evidence>
<feature type="chain" id="PRO_0000113664" description="Serine hydroxymethyltransferase">
    <location>
        <begin position="1"/>
        <end position="412"/>
    </location>
</feature>
<feature type="binding site" evidence="1">
    <location>
        <position position="117"/>
    </location>
    <ligand>
        <name>(6S)-5,6,7,8-tetrahydrofolate</name>
        <dbReference type="ChEBI" id="CHEBI:57453"/>
    </ligand>
</feature>
<feature type="binding site" evidence="1">
    <location>
        <begin position="121"/>
        <end position="123"/>
    </location>
    <ligand>
        <name>(6S)-5,6,7,8-tetrahydrofolate</name>
        <dbReference type="ChEBI" id="CHEBI:57453"/>
    </ligand>
</feature>
<feature type="site" description="Plays an important role in substrate specificity" evidence="1">
    <location>
        <position position="225"/>
    </location>
</feature>
<feature type="modified residue" description="N6-(pyridoxal phosphate)lysine" evidence="1">
    <location>
        <position position="226"/>
    </location>
</feature>
<protein>
    <recommendedName>
        <fullName evidence="1">Serine hydroxymethyltransferase</fullName>
        <shortName evidence="1">SHMT</shortName>
        <shortName evidence="1">Serine methylase</shortName>
        <ecNumber evidence="1">2.1.2.1</ecNumber>
    </recommendedName>
</protein>
<reference key="1">
    <citation type="journal article" date="2004" name="Proc. Natl. Acad. Sci. U.S.A.">
        <title>Complete genomes of two clinical Staphylococcus aureus strains: evidence for the rapid evolution of virulence and drug resistance.</title>
        <authorList>
            <person name="Holden M.T.G."/>
            <person name="Feil E.J."/>
            <person name="Lindsay J.A."/>
            <person name="Peacock S.J."/>
            <person name="Day N.P.J."/>
            <person name="Enright M.C."/>
            <person name="Foster T.J."/>
            <person name="Moore C.E."/>
            <person name="Hurst L."/>
            <person name="Atkin R."/>
            <person name="Barron A."/>
            <person name="Bason N."/>
            <person name="Bentley S.D."/>
            <person name="Chillingworth C."/>
            <person name="Chillingworth T."/>
            <person name="Churcher C."/>
            <person name="Clark L."/>
            <person name="Corton C."/>
            <person name="Cronin A."/>
            <person name="Doggett J."/>
            <person name="Dowd L."/>
            <person name="Feltwell T."/>
            <person name="Hance Z."/>
            <person name="Harris B."/>
            <person name="Hauser H."/>
            <person name="Holroyd S."/>
            <person name="Jagels K."/>
            <person name="James K.D."/>
            <person name="Lennard N."/>
            <person name="Line A."/>
            <person name="Mayes R."/>
            <person name="Moule S."/>
            <person name="Mungall K."/>
            <person name="Ormond D."/>
            <person name="Quail M.A."/>
            <person name="Rabbinowitsch E."/>
            <person name="Rutherford K.M."/>
            <person name="Sanders M."/>
            <person name="Sharp S."/>
            <person name="Simmonds M."/>
            <person name="Stevens K."/>
            <person name="Whitehead S."/>
            <person name="Barrell B.G."/>
            <person name="Spratt B.G."/>
            <person name="Parkhill J."/>
        </authorList>
    </citation>
    <scope>NUCLEOTIDE SEQUENCE [LARGE SCALE GENOMIC DNA]</scope>
    <source>
        <strain>MRSA252</strain>
    </source>
</reference>
<organism>
    <name type="scientific">Staphylococcus aureus (strain MRSA252)</name>
    <dbReference type="NCBI Taxonomy" id="282458"/>
    <lineage>
        <taxon>Bacteria</taxon>
        <taxon>Bacillati</taxon>
        <taxon>Bacillota</taxon>
        <taxon>Bacilli</taxon>
        <taxon>Bacillales</taxon>
        <taxon>Staphylococcaceae</taxon>
        <taxon>Staphylococcus</taxon>
    </lineage>
</organism>
<dbReference type="EC" id="2.1.2.1" evidence="1"/>
<dbReference type="EMBL" id="BX571856">
    <property type="protein sequence ID" value="CAG41182.1"/>
    <property type="molecule type" value="Genomic_DNA"/>
</dbReference>
<dbReference type="RefSeq" id="WP_000120494.1">
    <property type="nucleotide sequence ID" value="NC_002952.2"/>
</dbReference>
<dbReference type="SMR" id="Q6GEW2"/>
<dbReference type="KEGG" id="sar:SAR2201"/>
<dbReference type="HOGENOM" id="CLU_022477_2_1_9"/>
<dbReference type="UniPathway" id="UPA00193"/>
<dbReference type="UniPathway" id="UPA00288">
    <property type="reaction ID" value="UER01023"/>
</dbReference>
<dbReference type="Proteomes" id="UP000000596">
    <property type="component" value="Chromosome"/>
</dbReference>
<dbReference type="GO" id="GO:0005829">
    <property type="term" value="C:cytosol"/>
    <property type="evidence" value="ECO:0007669"/>
    <property type="project" value="TreeGrafter"/>
</dbReference>
<dbReference type="GO" id="GO:0004372">
    <property type="term" value="F:glycine hydroxymethyltransferase activity"/>
    <property type="evidence" value="ECO:0007669"/>
    <property type="project" value="UniProtKB-UniRule"/>
</dbReference>
<dbReference type="GO" id="GO:0030170">
    <property type="term" value="F:pyridoxal phosphate binding"/>
    <property type="evidence" value="ECO:0007669"/>
    <property type="project" value="UniProtKB-UniRule"/>
</dbReference>
<dbReference type="GO" id="GO:0019264">
    <property type="term" value="P:glycine biosynthetic process from serine"/>
    <property type="evidence" value="ECO:0007669"/>
    <property type="project" value="UniProtKB-UniRule"/>
</dbReference>
<dbReference type="GO" id="GO:0035999">
    <property type="term" value="P:tetrahydrofolate interconversion"/>
    <property type="evidence" value="ECO:0007669"/>
    <property type="project" value="UniProtKB-UniRule"/>
</dbReference>
<dbReference type="CDD" id="cd00378">
    <property type="entry name" value="SHMT"/>
    <property type="match status" value="1"/>
</dbReference>
<dbReference type="FunFam" id="3.40.640.10:FF:000001">
    <property type="entry name" value="Serine hydroxymethyltransferase"/>
    <property type="match status" value="1"/>
</dbReference>
<dbReference type="FunFam" id="3.90.1150.10:FF:000003">
    <property type="entry name" value="Serine hydroxymethyltransferase"/>
    <property type="match status" value="1"/>
</dbReference>
<dbReference type="Gene3D" id="3.90.1150.10">
    <property type="entry name" value="Aspartate Aminotransferase, domain 1"/>
    <property type="match status" value="1"/>
</dbReference>
<dbReference type="Gene3D" id="3.40.640.10">
    <property type="entry name" value="Type I PLP-dependent aspartate aminotransferase-like (Major domain)"/>
    <property type="match status" value="1"/>
</dbReference>
<dbReference type="HAMAP" id="MF_00051">
    <property type="entry name" value="SHMT"/>
    <property type="match status" value="1"/>
</dbReference>
<dbReference type="InterPro" id="IPR015424">
    <property type="entry name" value="PyrdxlP-dep_Trfase"/>
</dbReference>
<dbReference type="InterPro" id="IPR015421">
    <property type="entry name" value="PyrdxlP-dep_Trfase_major"/>
</dbReference>
<dbReference type="InterPro" id="IPR015422">
    <property type="entry name" value="PyrdxlP-dep_Trfase_small"/>
</dbReference>
<dbReference type="InterPro" id="IPR001085">
    <property type="entry name" value="Ser_HO-MeTrfase"/>
</dbReference>
<dbReference type="InterPro" id="IPR049943">
    <property type="entry name" value="Ser_HO-MeTrfase-like"/>
</dbReference>
<dbReference type="InterPro" id="IPR019798">
    <property type="entry name" value="Ser_HO-MeTrfase_PLP_BS"/>
</dbReference>
<dbReference type="InterPro" id="IPR039429">
    <property type="entry name" value="SHMT-like_dom"/>
</dbReference>
<dbReference type="NCBIfam" id="NF000586">
    <property type="entry name" value="PRK00011.1"/>
    <property type="match status" value="1"/>
</dbReference>
<dbReference type="PANTHER" id="PTHR11680">
    <property type="entry name" value="SERINE HYDROXYMETHYLTRANSFERASE"/>
    <property type="match status" value="1"/>
</dbReference>
<dbReference type="PANTHER" id="PTHR11680:SF35">
    <property type="entry name" value="SERINE HYDROXYMETHYLTRANSFERASE 1"/>
    <property type="match status" value="1"/>
</dbReference>
<dbReference type="Pfam" id="PF00464">
    <property type="entry name" value="SHMT"/>
    <property type="match status" value="1"/>
</dbReference>
<dbReference type="PIRSF" id="PIRSF000412">
    <property type="entry name" value="SHMT"/>
    <property type="match status" value="1"/>
</dbReference>
<dbReference type="SUPFAM" id="SSF53383">
    <property type="entry name" value="PLP-dependent transferases"/>
    <property type="match status" value="1"/>
</dbReference>
<dbReference type="PROSITE" id="PS00096">
    <property type="entry name" value="SHMT"/>
    <property type="match status" value="1"/>
</dbReference>
<name>GLYA_STAAR</name>